<accession>Q5PJE6</accession>
<evidence type="ECO:0000250" key="1"/>
<evidence type="ECO:0000255" key="2"/>
<evidence type="ECO:0000305" key="3"/>
<comment type="function">
    <text evidence="1">Part of the ABC transporter complex LsrABCD involved in autoinducer 2 (AI-2) import. Probably responsible for the translocation of the substrate across the membrane (By similarity).</text>
</comment>
<comment type="subunit">
    <text evidence="1">The complex is composed of two ATP-binding proteins (LsrA), two transmembrane proteins (LsrC and LsrD) and a solute-binding protein (LsrB).</text>
</comment>
<comment type="subcellular location">
    <subcellularLocation>
        <location evidence="1">Cell inner membrane</location>
        <topology evidence="1">Multi-pass membrane protein</topology>
    </subcellularLocation>
</comment>
<comment type="similarity">
    <text evidence="3">Belongs to the binding-protein-dependent transport system permease family. AraH/RbsC subfamily.</text>
</comment>
<gene>
    <name type="primary">lsrC</name>
    <name type="ordered locus">SPA3918</name>
</gene>
<proteinExistence type="inferred from homology"/>
<sequence>MLKFIQNNREATALLAIVCLFVFPGALDSQYLSVQTLTMVFSSAQILMLLAIGATMVMLTRNIDVSVGSTTGMCAVLLGVMLNAGYSLPVACLATLILGIVAGFFNGVLVAWLKIPAIVATLGTLGLYRGIMLLWTGGKWIEGLPAGLKQLSAPVFLGISAIGWFTLVLALLMAWLLAKTAFGRNFYATGDNLQGARQLGVRTEMVRIMAFSLNGGMAALAGIVFASQIGFIPNQTGTGLEMKAIAACVLGGISLLGGSGTVIGAILGAYFLTQIDSVLVLLRIPAWWNDFIAGLVLLGVLVFDGRLRCALQRNLRRQKYARFISPPTPLQTEAKTHAQQNKNKEVA</sequence>
<organism>
    <name type="scientific">Salmonella paratyphi A (strain ATCC 9150 / SARB42)</name>
    <dbReference type="NCBI Taxonomy" id="295319"/>
    <lineage>
        <taxon>Bacteria</taxon>
        <taxon>Pseudomonadati</taxon>
        <taxon>Pseudomonadota</taxon>
        <taxon>Gammaproteobacteria</taxon>
        <taxon>Enterobacterales</taxon>
        <taxon>Enterobacteriaceae</taxon>
        <taxon>Salmonella</taxon>
    </lineage>
</organism>
<protein>
    <recommendedName>
        <fullName>Autoinducer 2 import system permease protein LsrC</fullName>
        <shortName>AI-2 import system permease protein LsrC</shortName>
    </recommendedName>
</protein>
<reference key="1">
    <citation type="journal article" date="2004" name="Nat. Genet.">
        <title>Comparison of genome degradation in Paratyphi A and Typhi, human-restricted serovars of Salmonella enterica that cause typhoid.</title>
        <authorList>
            <person name="McClelland M."/>
            <person name="Sanderson K.E."/>
            <person name="Clifton S.W."/>
            <person name="Latreille P."/>
            <person name="Porwollik S."/>
            <person name="Sabo A."/>
            <person name="Meyer R."/>
            <person name="Bieri T."/>
            <person name="Ozersky P."/>
            <person name="McLellan M."/>
            <person name="Harkins C.R."/>
            <person name="Wang C."/>
            <person name="Nguyen C."/>
            <person name="Berghoff A."/>
            <person name="Elliott G."/>
            <person name="Kohlberg S."/>
            <person name="Strong C."/>
            <person name="Du F."/>
            <person name="Carter J."/>
            <person name="Kremizki C."/>
            <person name="Layman D."/>
            <person name="Leonard S."/>
            <person name="Sun H."/>
            <person name="Fulton L."/>
            <person name="Nash W."/>
            <person name="Miner T."/>
            <person name="Minx P."/>
            <person name="Delehaunty K."/>
            <person name="Fronick C."/>
            <person name="Magrini V."/>
            <person name="Nhan M."/>
            <person name="Warren W."/>
            <person name="Florea L."/>
            <person name="Spieth J."/>
            <person name="Wilson R.K."/>
        </authorList>
    </citation>
    <scope>NUCLEOTIDE SEQUENCE [LARGE SCALE GENOMIC DNA]</scope>
    <source>
        <strain>ATCC 9150 / SARB42</strain>
    </source>
</reference>
<name>LSRC_SALPA</name>
<dbReference type="EMBL" id="CP000026">
    <property type="protein sequence ID" value="AAV79683.1"/>
    <property type="molecule type" value="Genomic_DNA"/>
</dbReference>
<dbReference type="RefSeq" id="WP_000911134.1">
    <property type="nucleotide sequence ID" value="NC_006511.1"/>
</dbReference>
<dbReference type="KEGG" id="spt:SPA3918"/>
<dbReference type="HOGENOM" id="CLU_028880_0_1_6"/>
<dbReference type="Proteomes" id="UP000008185">
    <property type="component" value="Chromosome"/>
</dbReference>
<dbReference type="GO" id="GO:0005886">
    <property type="term" value="C:plasma membrane"/>
    <property type="evidence" value="ECO:0007669"/>
    <property type="project" value="UniProtKB-SubCell"/>
</dbReference>
<dbReference type="GO" id="GO:0022857">
    <property type="term" value="F:transmembrane transporter activity"/>
    <property type="evidence" value="ECO:0007669"/>
    <property type="project" value="InterPro"/>
</dbReference>
<dbReference type="CDD" id="cd06579">
    <property type="entry name" value="TM_PBP1_transp_AraH_like"/>
    <property type="match status" value="1"/>
</dbReference>
<dbReference type="InterPro" id="IPR001851">
    <property type="entry name" value="ABC_transp_permease"/>
</dbReference>
<dbReference type="NCBIfam" id="NF011961">
    <property type="entry name" value="PRK15432.1"/>
    <property type="match status" value="1"/>
</dbReference>
<dbReference type="PANTHER" id="PTHR32196">
    <property type="entry name" value="ABC TRANSPORTER PERMEASE PROTEIN YPHD-RELATED-RELATED"/>
    <property type="match status" value="1"/>
</dbReference>
<dbReference type="PANTHER" id="PTHR32196:SF29">
    <property type="entry name" value="AUTOINDUCER 2 IMPORT SYSTEM PERMEASE PROTEIN LSRC"/>
    <property type="match status" value="1"/>
</dbReference>
<dbReference type="Pfam" id="PF02653">
    <property type="entry name" value="BPD_transp_2"/>
    <property type="match status" value="1"/>
</dbReference>
<keyword id="KW-0997">Cell inner membrane</keyword>
<keyword id="KW-1003">Cell membrane</keyword>
<keyword id="KW-0472">Membrane</keyword>
<keyword id="KW-0812">Transmembrane</keyword>
<keyword id="KW-1133">Transmembrane helix</keyword>
<keyword id="KW-0813">Transport</keyword>
<feature type="chain" id="PRO_0000351347" description="Autoinducer 2 import system permease protein LsrC">
    <location>
        <begin position="1"/>
        <end position="347"/>
    </location>
</feature>
<feature type="transmembrane region" description="Helical" evidence="2">
    <location>
        <begin position="14"/>
        <end position="34"/>
    </location>
</feature>
<feature type="transmembrane region" description="Helical" evidence="2">
    <location>
        <begin position="39"/>
        <end position="59"/>
    </location>
</feature>
<feature type="transmembrane region" description="Helical" evidence="2">
    <location>
        <begin position="72"/>
        <end position="92"/>
    </location>
</feature>
<feature type="transmembrane region" description="Helical" evidence="2">
    <location>
        <begin position="93"/>
        <end position="113"/>
    </location>
</feature>
<feature type="transmembrane region" description="Helical" evidence="2">
    <location>
        <begin position="115"/>
        <end position="135"/>
    </location>
</feature>
<feature type="transmembrane region" description="Helical" evidence="2">
    <location>
        <begin position="155"/>
        <end position="175"/>
    </location>
</feature>
<feature type="transmembrane region" description="Helical" evidence="2">
    <location>
        <begin position="213"/>
        <end position="233"/>
    </location>
</feature>
<feature type="transmembrane region" description="Helical" evidence="2">
    <location>
        <begin position="249"/>
        <end position="269"/>
    </location>
</feature>
<feature type="transmembrane region" description="Helical" evidence="2">
    <location>
        <begin position="284"/>
        <end position="304"/>
    </location>
</feature>